<dbReference type="EC" id="2.7.11.32" evidence="1"/>
<dbReference type="EC" id="2.7.4.27" evidence="1"/>
<dbReference type="EMBL" id="CP000560">
    <property type="protein sequence ID" value="ABS74714.1"/>
    <property type="molecule type" value="Genomic_DNA"/>
</dbReference>
<dbReference type="RefSeq" id="WP_003152991.1">
    <property type="nucleotide sequence ID" value="NC_009725.2"/>
</dbReference>
<dbReference type="SMR" id="A7Z6T8"/>
<dbReference type="GeneID" id="93081491"/>
<dbReference type="KEGG" id="bay:RBAM_023540"/>
<dbReference type="HOGENOM" id="CLU_046206_2_1_9"/>
<dbReference type="Proteomes" id="UP000001120">
    <property type="component" value="Chromosome"/>
</dbReference>
<dbReference type="GO" id="GO:0043531">
    <property type="term" value="F:ADP binding"/>
    <property type="evidence" value="ECO:0007669"/>
    <property type="project" value="UniProtKB-UniRule"/>
</dbReference>
<dbReference type="GO" id="GO:0005524">
    <property type="term" value="F:ATP binding"/>
    <property type="evidence" value="ECO:0007669"/>
    <property type="project" value="InterPro"/>
</dbReference>
<dbReference type="GO" id="GO:0016776">
    <property type="term" value="F:phosphotransferase activity, phosphate group as acceptor"/>
    <property type="evidence" value="ECO:0007669"/>
    <property type="project" value="UniProtKB-UniRule"/>
</dbReference>
<dbReference type="GO" id="GO:0004674">
    <property type="term" value="F:protein serine/threonine kinase activity"/>
    <property type="evidence" value="ECO:0007669"/>
    <property type="project" value="UniProtKB-UniRule"/>
</dbReference>
<dbReference type="HAMAP" id="MF_00921">
    <property type="entry name" value="PDRP"/>
    <property type="match status" value="1"/>
</dbReference>
<dbReference type="InterPro" id="IPR005177">
    <property type="entry name" value="Kinase-pyrophosphorylase"/>
</dbReference>
<dbReference type="InterPro" id="IPR026565">
    <property type="entry name" value="PPDK_reg"/>
</dbReference>
<dbReference type="NCBIfam" id="NF003742">
    <property type="entry name" value="PRK05339.1"/>
    <property type="match status" value="1"/>
</dbReference>
<dbReference type="PANTHER" id="PTHR31756">
    <property type="entry name" value="PYRUVATE, PHOSPHATE DIKINASE REGULATORY PROTEIN 1, CHLOROPLASTIC"/>
    <property type="match status" value="1"/>
</dbReference>
<dbReference type="PANTHER" id="PTHR31756:SF3">
    <property type="entry name" value="PYRUVATE, PHOSPHATE DIKINASE REGULATORY PROTEIN 1, CHLOROPLASTIC"/>
    <property type="match status" value="1"/>
</dbReference>
<dbReference type="Pfam" id="PF03618">
    <property type="entry name" value="Kinase-PPPase"/>
    <property type="match status" value="1"/>
</dbReference>
<protein>
    <recommendedName>
        <fullName evidence="1">Putative pyruvate, phosphate dikinase regulatory protein</fullName>
        <shortName evidence="1">PPDK regulatory protein</shortName>
        <ecNumber evidence="1">2.7.11.32</ecNumber>
        <ecNumber evidence="1">2.7.4.27</ecNumber>
    </recommendedName>
</protein>
<reference key="1">
    <citation type="journal article" date="2007" name="Nat. Biotechnol.">
        <title>Comparative analysis of the complete genome sequence of the plant growth-promoting bacterium Bacillus amyloliquefaciens FZB42.</title>
        <authorList>
            <person name="Chen X.H."/>
            <person name="Koumoutsi A."/>
            <person name="Scholz R."/>
            <person name="Eisenreich A."/>
            <person name="Schneider K."/>
            <person name="Heinemeyer I."/>
            <person name="Morgenstern B."/>
            <person name="Voss B."/>
            <person name="Hess W.R."/>
            <person name="Reva O."/>
            <person name="Junge H."/>
            <person name="Voigt B."/>
            <person name="Jungblut P.R."/>
            <person name="Vater J."/>
            <person name="Suessmuth R."/>
            <person name="Liesegang H."/>
            <person name="Strittmatter A."/>
            <person name="Gottschalk G."/>
            <person name="Borriss R."/>
        </authorList>
    </citation>
    <scope>NUCLEOTIDE SEQUENCE [LARGE SCALE GENOMIC DNA]</scope>
    <source>
        <strain>DSM 23117 / BGSC 10A6 / LMG 26770 / FZB42</strain>
    </source>
</reference>
<keyword id="KW-0418">Kinase</keyword>
<keyword id="KW-0547">Nucleotide-binding</keyword>
<keyword id="KW-0723">Serine/threonine-protein kinase</keyword>
<keyword id="KW-0808">Transferase</keyword>
<gene>
    <name type="ordered locus">RBAM_023540</name>
</gene>
<accession>A7Z6T8</accession>
<name>PDRP_BACVZ</name>
<evidence type="ECO:0000255" key="1">
    <source>
        <dbReference type="HAMAP-Rule" id="MF_00921"/>
    </source>
</evidence>
<feature type="chain" id="PRO_0000316635" description="Putative pyruvate, phosphate dikinase regulatory protein">
    <location>
        <begin position="1"/>
        <end position="270"/>
    </location>
</feature>
<feature type="binding site" evidence="1">
    <location>
        <begin position="151"/>
        <end position="158"/>
    </location>
    <ligand>
        <name>ADP</name>
        <dbReference type="ChEBI" id="CHEBI:456216"/>
    </ligand>
</feature>
<proteinExistence type="inferred from homology"/>
<sequence>MDNRIIYVVSDSVGETAELVVKASLSQFNGSADDTHIRRIPYVEDIGTINEVVSLAKADGGIICFTLVVPEMRKYLVEQAEKANVLYYDIIGPLIDKMESAYGLTAKYEPGRVRQLDEDYFKKVEAIEFAVKYDDGRDPRGILKADIILLGVSRTSKTPLSQYLAHKRLKVANVPIVPEVDPPEELFSVDPKKCIGLKISPDKLNHIRKERLKSLGLNDKAIYANINRIKEELEYFEKIVDRIGCQVVDVSNKAVEETANIIHHLKTKGR</sequence>
<organism>
    <name type="scientific">Bacillus velezensis (strain DSM 23117 / BGSC 10A6 / LMG 26770 / FZB42)</name>
    <name type="common">Bacillus amyloliquefaciens subsp. plantarum</name>
    <dbReference type="NCBI Taxonomy" id="326423"/>
    <lineage>
        <taxon>Bacteria</taxon>
        <taxon>Bacillati</taxon>
        <taxon>Bacillota</taxon>
        <taxon>Bacilli</taxon>
        <taxon>Bacillales</taxon>
        <taxon>Bacillaceae</taxon>
        <taxon>Bacillus</taxon>
        <taxon>Bacillus amyloliquefaciens group</taxon>
    </lineage>
</organism>
<comment type="function">
    <text evidence="1">Bifunctional serine/threonine kinase and phosphorylase involved in the regulation of the pyruvate, phosphate dikinase (PPDK) by catalyzing its phosphorylation/dephosphorylation.</text>
</comment>
<comment type="catalytic activity">
    <reaction evidence="1">
        <text>N(tele)-phospho-L-histidyl/L-threonyl-[pyruvate, phosphate dikinase] + ADP = N(tele)-phospho-L-histidyl/O-phospho-L-threonyl-[pyruvate, phosphate dikinase] + AMP + H(+)</text>
        <dbReference type="Rhea" id="RHEA:43692"/>
        <dbReference type="Rhea" id="RHEA-COMP:10650"/>
        <dbReference type="Rhea" id="RHEA-COMP:10651"/>
        <dbReference type="ChEBI" id="CHEBI:15378"/>
        <dbReference type="ChEBI" id="CHEBI:30013"/>
        <dbReference type="ChEBI" id="CHEBI:61977"/>
        <dbReference type="ChEBI" id="CHEBI:83586"/>
        <dbReference type="ChEBI" id="CHEBI:456215"/>
        <dbReference type="ChEBI" id="CHEBI:456216"/>
        <dbReference type="EC" id="2.7.11.32"/>
    </reaction>
</comment>
<comment type="catalytic activity">
    <reaction evidence="1">
        <text>N(tele)-phospho-L-histidyl/O-phospho-L-threonyl-[pyruvate, phosphate dikinase] + phosphate + H(+) = N(tele)-phospho-L-histidyl/L-threonyl-[pyruvate, phosphate dikinase] + diphosphate</text>
        <dbReference type="Rhea" id="RHEA:43696"/>
        <dbReference type="Rhea" id="RHEA-COMP:10650"/>
        <dbReference type="Rhea" id="RHEA-COMP:10651"/>
        <dbReference type="ChEBI" id="CHEBI:15378"/>
        <dbReference type="ChEBI" id="CHEBI:30013"/>
        <dbReference type="ChEBI" id="CHEBI:33019"/>
        <dbReference type="ChEBI" id="CHEBI:43474"/>
        <dbReference type="ChEBI" id="CHEBI:61977"/>
        <dbReference type="ChEBI" id="CHEBI:83586"/>
        <dbReference type="EC" id="2.7.4.27"/>
    </reaction>
</comment>
<comment type="similarity">
    <text evidence="1">Belongs to the pyruvate, phosphate/water dikinase regulatory protein family. PDRP subfamily.</text>
</comment>